<proteinExistence type="evidence at protein level"/>
<organism>
    <name type="scientific">Pseudotsuga menziesii</name>
    <name type="common">Douglas-fir</name>
    <name type="synonym">Abies menziesii</name>
    <dbReference type="NCBI Taxonomy" id="3357"/>
    <lineage>
        <taxon>Eukaryota</taxon>
        <taxon>Viridiplantae</taxon>
        <taxon>Streptophyta</taxon>
        <taxon>Embryophyta</taxon>
        <taxon>Tracheophyta</taxon>
        <taxon>Spermatophyta</taxon>
        <taxon>Pinopsida</taxon>
        <taxon>Pinidae</taxon>
        <taxon>Conifers I</taxon>
        <taxon>Pinales</taxon>
        <taxon>Pinaceae</taxon>
        <taxon>Pseudotsuga</taxon>
    </lineage>
</organism>
<evidence type="ECO:0000303" key="1">
    <source>
    </source>
</evidence>
<evidence type="ECO:0000305" key="2"/>
<dbReference type="EC" id="1.11.1.7"/>
<dbReference type="GO" id="GO:0140825">
    <property type="term" value="F:lactoperoxidase activity"/>
    <property type="evidence" value="ECO:0007669"/>
    <property type="project" value="UniProtKB-EC"/>
</dbReference>
<name>PER_PSEMZ</name>
<keyword id="KW-0560">Oxidoreductase</keyword>
<keyword id="KW-0575">Peroxidase</keyword>
<sequence length="14" mass="1348">AMAGTATVQGQGTR</sequence>
<comment type="catalytic activity">
    <reaction>
        <text>2 a phenolic donor + H2O2 = 2 a phenolic radical donor + 2 H2O</text>
        <dbReference type="Rhea" id="RHEA:56136"/>
        <dbReference type="ChEBI" id="CHEBI:15377"/>
        <dbReference type="ChEBI" id="CHEBI:16240"/>
        <dbReference type="ChEBI" id="CHEBI:139520"/>
        <dbReference type="ChEBI" id="CHEBI:139521"/>
        <dbReference type="EC" id="1.11.1.7"/>
    </reaction>
</comment>
<comment type="similarity">
    <text evidence="2">Belongs to the peroxidase family.</text>
</comment>
<reference key="1">
    <citation type="journal article" date="2008" name="J. Proteomics">
        <title>A proteomics approach to identify proteins differentially expressed in Douglas-fir seedlings infected by Phellinus sulphurascens.</title>
        <authorList>
            <person name="Islam M.A."/>
            <person name="Sturrock R.N."/>
            <person name="Ekramoddoullah A.K.M."/>
        </authorList>
    </citation>
    <scope>IDENTIFICATION BY MASS SPECTROMETRY</scope>
</reference>
<accession>P85957</accession>
<protein>
    <recommendedName>
        <fullName evidence="1">Peroxidase</fullName>
        <ecNumber>1.11.1.7</ecNumber>
    </recommendedName>
</protein>
<feature type="chain" id="PRO_0000392470" description="Peroxidase">
    <location>
        <begin position="1" status="less than"/>
        <end position="14" status="greater than"/>
    </location>
</feature>
<feature type="non-terminal residue" evidence="1">
    <location>
        <position position="1"/>
    </location>
</feature>
<feature type="non-terminal residue" evidence="1">
    <location>
        <position position="14"/>
    </location>
</feature>